<reference key="1">
    <citation type="journal article" date="2011" name="J. Bacteriol.">
        <title>Complete genome sequence of the metabolically versatile plant growth-promoting endophyte, Variovorax paradoxus S110.</title>
        <authorList>
            <person name="Han J.I."/>
            <person name="Choi H.K."/>
            <person name="Lee S.W."/>
            <person name="Orwin P.M."/>
            <person name="Kim J."/>
            <person name="Laroe S.L."/>
            <person name="Kim T.G."/>
            <person name="O'Neil J."/>
            <person name="Leadbetter J.R."/>
            <person name="Lee S.Y."/>
            <person name="Hur C.G."/>
            <person name="Spain J.C."/>
            <person name="Ovchinnikova G."/>
            <person name="Goodwin L."/>
            <person name="Han C."/>
        </authorList>
    </citation>
    <scope>NUCLEOTIDE SEQUENCE [LARGE SCALE GENOMIC DNA]</scope>
    <source>
        <strain>S110</strain>
    </source>
</reference>
<comment type="function">
    <text evidence="1">This protein is one of the early assembly proteins of the 50S ribosomal subunit, although it is not seen to bind rRNA by itself. It is important during the early stages of 50S assembly.</text>
</comment>
<comment type="subunit">
    <text evidence="1">Part of the 50S ribosomal subunit.</text>
</comment>
<comment type="similarity">
    <text evidence="1">Belongs to the universal ribosomal protein uL13 family.</text>
</comment>
<keyword id="KW-0687">Ribonucleoprotein</keyword>
<keyword id="KW-0689">Ribosomal protein</keyword>
<feature type="chain" id="PRO_1000214967" description="Large ribosomal subunit protein uL13">
    <location>
        <begin position="1"/>
        <end position="143"/>
    </location>
</feature>
<dbReference type="EMBL" id="CP001635">
    <property type="protein sequence ID" value="ACS21283.1"/>
    <property type="molecule type" value="Genomic_DNA"/>
</dbReference>
<dbReference type="SMR" id="C5CM24"/>
<dbReference type="STRING" id="543728.Vapar_4678"/>
<dbReference type="KEGG" id="vap:Vapar_4678"/>
<dbReference type="eggNOG" id="COG0102">
    <property type="taxonomic scope" value="Bacteria"/>
</dbReference>
<dbReference type="HOGENOM" id="CLU_082184_2_2_4"/>
<dbReference type="OrthoDB" id="9801330at2"/>
<dbReference type="GO" id="GO:0022625">
    <property type="term" value="C:cytosolic large ribosomal subunit"/>
    <property type="evidence" value="ECO:0007669"/>
    <property type="project" value="TreeGrafter"/>
</dbReference>
<dbReference type="GO" id="GO:0003729">
    <property type="term" value="F:mRNA binding"/>
    <property type="evidence" value="ECO:0007669"/>
    <property type="project" value="TreeGrafter"/>
</dbReference>
<dbReference type="GO" id="GO:0003735">
    <property type="term" value="F:structural constituent of ribosome"/>
    <property type="evidence" value="ECO:0007669"/>
    <property type="project" value="InterPro"/>
</dbReference>
<dbReference type="GO" id="GO:0017148">
    <property type="term" value="P:negative regulation of translation"/>
    <property type="evidence" value="ECO:0007669"/>
    <property type="project" value="TreeGrafter"/>
</dbReference>
<dbReference type="GO" id="GO:0006412">
    <property type="term" value="P:translation"/>
    <property type="evidence" value="ECO:0007669"/>
    <property type="project" value="UniProtKB-UniRule"/>
</dbReference>
<dbReference type="CDD" id="cd00392">
    <property type="entry name" value="Ribosomal_L13"/>
    <property type="match status" value="1"/>
</dbReference>
<dbReference type="FunFam" id="3.90.1180.10:FF:000001">
    <property type="entry name" value="50S ribosomal protein L13"/>
    <property type="match status" value="1"/>
</dbReference>
<dbReference type="Gene3D" id="3.90.1180.10">
    <property type="entry name" value="Ribosomal protein L13"/>
    <property type="match status" value="1"/>
</dbReference>
<dbReference type="HAMAP" id="MF_01366">
    <property type="entry name" value="Ribosomal_uL13"/>
    <property type="match status" value="1"/>
</dbReference>
<dbReference type="InterPro" id="IPR005822">
    <property type="entry name" value="Ribosomal_uL13"/>
</dbReference>
<dbReference type="InterPro" id="IPR005823">
    <property type="entry name" value="Ribosomal_uL13_bac-type"/>
</dbReference>
<dbReference type="InterPro" id="IPR036899">
    <property type="entry name" value="Ribosomal_uL13_sf"/>
</dbReference>
<dbReference type="NCBIfam" id="TIGR01066">
    <property type="entry name" value="rplM_bact"/>
    <property type="match status" value="1"/>
</dbReference>
<dbReference type="PANTHER" id="PTHR11545:SF2">
    <property type="entry name" value="LARGE RIBOSOMAL SUBUNIT PROTEIN UL13M"/>
    <property type="match status" value="1"/>
</dbReference>
<dbReference type="PANTHER" id="PTHR11545">
    <property type="entry name" value="RIBOSOMAL PROTEIN L13"/>
    <property type="match status" value="1"/>
</dbReference>
<dbReference type="Pfam" id="PF00572">
    <property type="entry name" value="Ribosomal_L13"/>
    <property type="match status" value="1"/>
</dbReference>
<dbReference type="PIRSF" id="PIRSF002181">
    <property type="entry name" value="Ribosomal_L13"/>
    <property type="match status" value="1"/>
</dbReference>
<dbReference type="SUPFAM" id="SSF52161">
    <property type="entry name" value="Ribosomal protein L13"/>
    <property type="match status" value="1"/>
</dbReference>
<sequence>MTKTFSAKPADVTHEWFVIDATDKVLGRVASEVALRLRGKHKAIYTPHVDTGDFIVIINAAQLRVTGAKPIDKVYYRHSGYPGGITATNFRDMQAKHPGRALEKAVKGMLPKGPLGYAMIKKLKVYGGAEHPHTAQQPKVLEL</sequence>
<organism>
    <name type="scientific">Variovorax paradoxus (strain S110)</name>
    <dbReference type="NCBI Taxonomy" id="543728"/>
    <lineage>
        <taxon>Bacteria</taxon>
        <taxon>Pseudomonadati</taxon>
        <taxon>Pseudomonadota</taxon>
        <taxon>Betaproteobacteria</taxon>
        <taxon>Burkholderiales</taxon>
        <taxon>Comamonadaceae</taxon>
        <taxon>Variovorax</taxon>
    </lineage>
</organism>
<evidence type="ECO:0000255" key="1">
    <source>
        <dbReference type="HAMAP-Rule" id="MF_01366"/>
    </source>
</evidence>
<evidence type="ECO:0000305" key="2"/>
<protein>
    <recommendedName>
        <fullName evidence="1">Large ribosomal subunit protein uL13</fullName>
    </recommendedName>
    <alternativeName>
        <fullName evidence="2">50S ribosomal protein L13</fullName>
    </alternativeName>
</protein>
<gene>
    <name evidence="1" type="primary">rplM</name>
    <name type="ordered locus">Vapar_4678</name>
</gene>
<proteinExistence type="inferred from homology"/>
<name>RL13_VARPS</name>
<accession>C5CM24</accession>